<dbReference type="EC" id="1.1.1.9" evidence="3"/>
<dbReference type="EMBL" id="AB109101">
    <property type="protein sequence ID" value="BAC75870.2"/>
    <property type="molecule type" value="Genomic_DNA"/>
</dbReference>
<dbReference type="EMBL" id="GQ222265">
    <property type="protein sequence ID" value="ACR55076.1"/>
    <property type="molecule type" value="Genomic_DNA"/>
</dbReference>
<dbReference type="EMBL" id="GQ222266">
    <property type="protein sequence ID" value="ACR55077.1"/>
    <property type="molecule type" value="Genomic_DNA"/>
</dbReference>
<dbReference type="EMBL" id="BA000054">
    <property type="protein sequence ID" value="BAE64390.1"/>
    <property type="molecule type" value="Genomic_DNA"/>
</dbReference>
<dbReference type="RefSeq" id="XP_001825523.1">
    <property type="nucleotide sequence ID" value="XM_001825471.2"/>
</dbReference>
<dbReference type="SMR" id="Q86ZV0"/>
<dbReference type="STRING" id="510516.Q86ZV0"/>
<dbReference type="EnsemblFungi" id="BAE64390">
    <property type="protein sequence ID" value="BAE64390"/>
    <property type="gene ID" value="AO090038000631"/>
</dbReference>
<dbReference type="GeneID" id="5997618"/>
<dbReference type="KEGG" id="aor:AO090038000631"/>
<dbReference type="VEuPathDB" id="FungiDB:AO090038000631"/>
<dbReference type="HOGENOM" id="CLU_026673_11_5_1"/>
<dbReference type="OMA" id="FETWYAM"/>
<dbReference type="OrthoDB" id="48535at5052"/>
<dbReference type="BioCyc" id="MetaCyc:MONOMER-13192"/>
<dbReference type="BRENDA" id="1.1.1.9">
    <property type="organism ID" value="522"/>
</dbReference>
<dbReference type="UniPathway" id="UPA00146">
    <property type="reaction ID" value="UER00577"/>
</dbReference>
<dbReference type="Proteomes" id="UP000006564">
    <property type="component" value="Chromosome 6"/>
</dbReference>
<dbReference type="GO" id="GO:0046526">
    <property type="term" value="F:D-xylulose reductase activity"/>
    <property type="evidence" value="ECO:0000314"/>
    <property type="project" value="AspGD"/>
</dbReference>
<dbReference type="GO" id="GO:0003939">
    <property type="term" value="F:L-iditol 2-dehydrogenase (NAD+) activity"/>
    <property type="evidence" value="ECO:0007669"/>
    <property type="project" value="TreeGrafter"/>
</dbReference>
<dbReference type="GO" id="GO:0008270">
    <property type="term" value="F:zinc ion binding"/>
    <property type="evidence" value="ECO:0007669"/>
    <property type="project" value="InterPro"/>
</dbReference>
<dbReference type="GO" id="GO:0042843">
    <property type="term" value="P:D-xylose catabolic process"/>
    <property type="evidence" value="ECO:0000305"/>
    <property type="project" value="AspGD"/>
</dbReference>
<dbReference type="GO" id="GO:0019569">
    <property type="term" value="P:L-arabinose catabolic process to xylulose 5-phosphate"/>
    <property type="evidence" value="ECO:0007669"/>
    <property type="project" value="UniProtKB-UniPathway"/>
</dbReference>
<dbReference type="GO" id="GO:0019697">
    <property type="term" value="P:L-xylitol catabolic process to xylulose 5-phosphate"/>
    <property type="evidence" value="ECO:0000315"/>
    <property type="project" value="AspGD"/>
</dbReference>
<dbReference type="GO" id="GO:0006062">
    <property type="term" value="P:sorbitol catabolic process"/>
    <property type="evidence" value="ECO:0007669"/>
    <property type="project" value="TreeGrafter"/>
</dbReference>
<dbReference type="CDD" id="cd05285">
    <property type="entry name" value="sorbitol_DH"/>
    <property type="match status" value="1"/>
</dbReference>
<dbReference type="FunFam" id="3.40.50.720:FF:000068">
    <property type="entry name" value="Sorbitol dehydrogenase"/>
    <property type="match status" value="1"/>
</dbReference>
<dbReference type="Gene3D" id="3.90.180.10">
    <property type="entry name" value="Medium-chain alcohol dehydrogenases, catalytic domain"/>
    <property type="match status" value="1"/>
</dbReference>
<dbReference type="Gene3D" id="3.40.50.720">
    <property type="entry name" value="NAD(P)-binding Rossmann-like Domain"/>
    <property type="match status" value="1"/>
</dbReference>
<dbReference type="InterPro" id="IPR013149">
    <property type="entry name" value="ADH-like_C"/>
</dbReference>
<dbReference type="InterPro" id="IPR013154">
    <property type="entry name" value="ADH-like_N"/>
</dbReference>
<dbReference type="InterPro" id="IPR002328">
    <property type="entry name" value="ADH_Zn_CS"/>
</dbReference>
<dbReference type="InterPro" id="IPR011032">
    <property type="entry name" value="GroES-like_sf"/>
</dbReference>
<dbReference type="InterPro" id="IPR036291">
    <property type="entry name" value="NAD(P)-bd_dom_sf"/>
</dbReference>
<dbReference type="InterPro" id="IPR020843">
    <property type="entry name" value="PKS_ER"/>
</dbReference>
<dbReference type="InterPro" id="IPR045306">
    <property type="entry name" value="SDH-like"/>
</dbReference>
<dbReference type="PANTHER" id="PTHR43161">
    <property type="entry name" value="SORBITOL DEHYDROGENASE"/>
    <property type="match status" value="1"/>
</dbReference>
<dbReference type="PANTHER" id="PTHR43161:SF9">
    <property type="entry name" value="SORBITOL DEHYDROGENASE"/>
    <property type="match status" value="1"/>
</dbReference>
<dbReference type="Pfam" id="PF08240">
    <property type="entry name" value="ADH_N"/>
    <property type="match status" value="1"/>
</dbReference>
<dbReference type="Pfam" id="PF00107">
    <property type="entry name" value="ADH_zinc_N"/>
    <property type="match status" value="1"/>
</dbReference>
<dbReference type="SMART" id="SM00829">
    <property type="entry name" value="PKS_ER"/>
    <property type="match status" value="1"/>
</dbReference>
<dbReference type="SUPFAM" id="SSF50129">
    <property type="entry name" value="GroES-like"/>
    <property type="match status" value="1"/>
</dbReference>
<dbReference type="SUPFAM" id="SSF51735">
    <property type="entry name" value="NAD(P)-binding Rossmann-fold domains"/>
    <property type="match status" value="1"/>
</dbReference>
<dbReference type="PROSITE" id="PS00059">
    <property type="entry name" value="ADH_ZINC"/>
    <property type="match status" value="1"/>
</dbReference>
<proteinExistence type="evidence at protein level"/>
<keyword id="KW-0119">Carbohydrate metabolism</keyword>
<keyword id="KW-0479">Metal-binding</keyword>
<keyword id="KW-0520">NAD</keyword>
<keyword id="KW-0560">Oxidoreductase</keyword>
<keyword id="KW-1185">Reference proteome</keyword>
<keyword id="KW-0859">Xylose metabolism</keyword>
<keyword id="KW-0862">Zinc</keyword>
<sequence>MGAPPKTAQNLSFVLEGIHKVKFEDRPIPQLRDAHDVLVDVRFTGICGSDVHYWEHGSIGQFVVKDPMVLGHESSGVISKVGSAVTTLKVGDHVAMEPGIPCRRCEPCKEGKYNLCEKMAFAATPPYDGTLAKYYVLPEDFCYKLPENINLQEAAVMEPLSVAVHIVKQANVAPGQSVVVFGAGPVGLLCCAVARAFGSPKVIAVDIQKGRLEFAKKYAATAIFEPSKVSALENAERIVNENDLGRGADIVIDASGAEPSVHTGIHVLRPGGTYVQGGMGRNEITFPIMAACTKELNVRGSFRYGSGDYKLAVNLVASGKVSVKELITGVVSFEDAEQAFHEVKAGKGIKTLIAGVDV</sequence>
<name>XYL2_ASPOR</name>
<accession>Q86ZV0</accession>
<gene>
    <name type="primary">xdhA</name>
    <name type="ORF">AO090038000631</name>
</gene>
<comment type="function">
    <text evidence="3">Xylitol dehydrogenase which catalyzes the conversion of xylitol to D-xylulose. Xylose is a major component of hemicelluloses such as xylan. Most fungi utilize D-xylose via three enzymatic reactions, xylose reductase (XR), xylitol dehydrogenase (XDH), and xylulokinase, to form xylulose 5-phosphate, which enters pentose phosphate pathway.</text>
</comment>
<comment type="catalytic activity">
    <reaction evidence="3">
        <text>xylitol + NAD(+) = D-xylulose + NADH + H(+)</text>
        <dbReference type="Rhea" id="RHEA:20433"/>
        <dbReference type="ChEBI" id="CHEBI:15378"/>
        <dbReference type="ChEBI" id="CHEBI:17140"/>
        <dbReference type="ChEBI" id="CHEBI:17151"/>
        <dbReference type="ChEBI" id="CHEBI:57540"/>
        <dbReference type="ChEBI" id="CHEBI:57945"/>
        <dbReference type="EC" id="1.1.1.9"/>
    </reaction>
    <physiologicalReaction direction="left-to-right" evidence="5">
        <dbReference type="Rhea" id="RHEA:20434"/>
    </physiologicalReaction>
</comment>
<comment type="cofactor">
    <cofactor evidence="1">
        <name>Zn(2+)</name>
        <dbReference type="ChEBI" id="CHEBI:29105"/>
    </cofactor>
    <text evidence="1">Binds 1 zinc ion per subunit.</text>
</comment>
<comment type="pathway">
    <text evidence="5">Carbohydrate degradation; L-arabinose degradation via L-arabinitol; D-xylulose 5-phosphate from L-arabinose (fungal route): step 4/5.</text>
</comment>
<comment type="similarity">
    <text evidence="4">Belongs to the zinc-containing alcohol dehydrogenase family.</text>
</comment>
<organism>
    <name type="scientific">Aspergillus oryzae (strain ATCC 42149 / RIB 40)</name>
    <name type="common">Yellow koji mold</name>
    <dbReference type="NCBI Taxonomy" id="510516"/>
    <lineage>
        <taxon>Eukaryota</taxon>
        <taxon>Fungi</taxon>
        <taxon>Dikarya</taxon>
        <taxon>Ascomycota</taxon>
        <taxon>Pezizomycotina</taxon>
        <taxon>Eurotiomycetes</taxon>
        <taxon>Eurotiomycetidae</taxon>
        <taxon>Eurotiales</taxon>
        <taxon>Aspergillaceae</taxon>
        <taxon>Aspergillus</taxon>
        <taxon>Aspergillus subgen. Circumdati</taxon>
    </lineage>
</organism>
<reference key="1">
    <citation type="journal article" date="2004" name="J. Biosci. Bioeng.">
        <title>Cloning and expression of a NAD+-dependent xylitol dehydrogenase gene (xdhA) of Aspergillus oryzae.</title>
        <authorList>
            <person name="Tran L.H."/>
            <person name="Kitamoto N."/>
            <person name="Kawai K."/>
            <person name="Takamizawa K."/>
            <person name="Suzuki T."/>
        </authorList>
    </citation>
    <scope>NUCLEOTIDE SEQUENCE [GENOMIC DNA]</scope>
    <scope>FUNCTION</scope>
    <scope>CATALYTIC ACTIVITY</scope>
    <scope>PATHWAY</scope>
</reference>
<reference key="2">
    <citation type="submission" date="2009-04" db="EMBL/GenBank/DDBJ databases">
        <title>Cloning and expression of xylitol dehydrogenase (XDH) of Aspergillus oryzae.</title>
        <authorList>
            <person name="Chen H.W."/>
            <person name="Tan C.H."/>
            <person name="Liu W."/>
            <person name="Lin R."/>
        </authorList>
    </citation>
    <scope>NUCLEOTIDE SEQUENCE [GENOMIC DNA]</scope>
    <source>
        <strain>CICC 2012</strain>
        <strain>CICC 2120</strain>
    </source>
</reference>
<reference key="3">
    <citation type="journal article" date="2005" name="Nature">
        <title>Genome sequencing and analysis of Aspergillus oryzae.</title>
        <authorList>
            <person name="Machida M."/>
            <person name="Asai K."/>
            <person name="Sano M."/>
            <person name="Tanaka T."/>
            <person name="Kumagai T."/>
            <person name="Terai G."/>
            <person name="Kusumoto K."/>
            <person name="Arima T."/>
            <person name="Akita O."/>
            <person name="Kashiwagi Y."/>
            <person name="Abe K."/>
            <person name="Gomi K."/>
            <person name="Horiuchi H."/>
            <person name="Kitamoto K."/>
            <person name="Kobayashi T."/>
            <person name="Takeuchi M."/>
            <person name="Denning D.W."/>
            <person name="Galagan J.E."/>
            <person name="Nierman W.C."/>
            <person name="Yu J."/>
            <person name="Archer D.B."/>
            <person name="Bennett J.W."/>
            <person name="Bhatnagar D."/>
            <person name="Cleveland T.E."/>
            <person name="Fedorova N.D."/>
            <person name="Gotoh O."/>
            <person name="Horikawa H."/>
            <person name="Hosoyama A."/>
            <person name="Ichinomiya M."/>
            <person name="Igarashi R."/>
            <person name="Iwashita K."/>
            <person name="Juvvadi P.R."/>
            <person name="Kato M."/>
            <person name="Kato Y."/>
            <person name="Kin T."/>
            <person name="Kokubun A."/>
            <person name="Maeda H."/>
            <person name="Maeyama N."/>
            <person name="Maruyama J."/>
            <person name="Nagasaki H."/>
            <person name="Nakajima T."/>
            <person name="Oda K."/>
            <person name="Okada K."/>
            <person name="Paulsen I."/>
            <person name="Sakamoto K."/>
            <person name="Sawano T."/>
            <person name="Takahashi M."/>
            <person name="Takase K."/>
            <person name="Terabayashi Y."/>
            <person name="Wortman J.R."/>
            <person name="Yamada O."/>
            <person name="Yamagata Y."/>
            <person name="Anazawa H."/>
            <person name="Hata Y."/>
            <person name="Koide Y."/>
            <person name="Komori T."/>
            <person name="Koyama Y."/>
            <person name="Minetoki T."/>
            <person name="Suharnan S."/>
            <person name="Tanaka A."/>
            <person name="Isono K."/>
            <person name="Kuhara S."/>
            <person name="Ogasawara N."/>
            <person name="Kikuchi H."/>
        </authorList>
    </citation>
    <scope>NUCLEOTIDE SEQUENCE [LARGE SCALE GENOMIC DNA]</scope>
    <source>
        <strain>ATCC 42149 / RIB 40</strain>
    </source>
</reference>
<protein>
    <recommendedName>
        <fullName>D-xylulose reductase A</fullName>
        <ecNumber evidence="3">1.1.1.9</ecNumber>
    </recommendedName>
    <alternativeName>
        <fullName>Xylitol dehydrogenase A</fullName>
    </alternativeName>
</protein>
<evidence type="ECO:0000250" key="1"/>
<evidence type="ECO:0000255" key="2"/>
<evidence type="ECO:0000269" key="3">
    <source>
    </source>
</evidence>
<evidence type="ECO:0000305" key="4"/>
<evidence type="ECO:0000305" key="5">
    <source>
    </source>
</evidence>
<feature type="chain" id="PRO_0000393511" description="D-xylulose reductase A">
    <location>
        <begin position="1"/>
        <end position="358"/>
    </location>
</feature>
<feature type="binding site" evidence="1">
    <location>
        <position position="47"/>
    </location>
    <ligand>
        <name>Zn(2+)</name>
        <dbReference type="ChEBI" id="CHEBI:29105"/>
        <note>catalytic</note>
    </ligand>
</feature>
<feature type="binding site" evidence="1">
    <location>
        <position position="72"/>
    </location>
    <ligand>
        <name>Zn(2+)</name>
        <dbReference type="ChEBI" id="CHEBI:29105"/>
        <note>catalytic</note>
    </ligand>
</feature>
<feature type="binding site" evidence="1">
    <location>
        <position position="73"/>
    </location>
    <ligand>
        <name>Zn(2+)</name>
        <dbReference type="ChEBI" id="CHEBI:29105"/>
        <note>catalytic</note>
    </ligand>
</feature>
<feature type="binding site" evidence="2">
    <location>
        <begin position="182"/>
        <end position="187"/>
    </location>
    <ligand>
        <name>NAD(+)</name>
        <dbReference type="ChEBI" id="CHEBI:57540"/>
    </ligand>
</feature>